<organism>
    <name type="scientific">Pseudomonas syringae pv. tomato (strain ATCC BAA-871 / DC3000)</name>
    <dbReference type="NCBI Taxonomy" id="223283"/>
    <lineage>
        <taxon>Bacteria</taxon>
        <taxon>Pseudomonadati</taxon>
        <taxon>Pseudomonadota</taxon>
        <taxon>Gammaproteobacteria</taxon>
        <taxon>Pseudomonadales</taxon>
        <taxon>Pseudomonadaceae</taxon>
        <taxon>Pseudomonas</taxon>
    </lineage>
</organism>
<gene>
    <name type="primary">dsbA</name>
    <name type="ordered locus">PSPTO_0341</name>
</gene>
<comment type="function">
    <text evidence="1">Involved in disulfide-bond formation. Acts by transferring its disulfide bond to other proteins (By similarity).</text>
</comment>
<comment type="subcellular location">
    <subcellularLocation>
        <location evidence="1">Periplasm</location>
    </subcellularLocation>
</comment>
<comment type="similarity">
    <text evidence="4">Belongs to the thioredoxin family. DsbA subfamily.</text>
</comment>
<protein>
    <recommendedName>
        <fullName>Thiol:disulfide interchange protein DsbA</fullName>
    </recommendedName>
</protein>
<accession>O52376</accession>
<feature type="signal peptide" evidence="2">
    <location>
        <begin position="1"/>
        <end position="22"/>
    </location>
</feature>
<feature type="chain" id="PRO_0000034263" description="Thiol:disulfide interchange protein DsbA">
    <location>
        <begin position="23"/>
        <end position="214"/>
    </location>
</feature>
<feature type="domain" description="Thioredoxin" evidence="3">
    <location>
        <begin position="23"/>
        <end position="154"/>
    </location>
</feature>
<feature type="disulfide bond" description="Redox-active" evidence="3">
    <location>
        <begin position="57"/>
        <end position="60"/>
    </location>
</feature>
<reference key="1">
    <citation type="submission" date="1997-12" db="EMBL/GenBank/DDBJ databases">
        <authorList>
            <person name="Kloek A.P."/>
            <person name="Kunkel B.N."/>
        </authorList>
    </citation>
    <scope>NUCLEOTIDE SEQUENCE [GENOMIC DNA]</scope>
</reference>
<reference key="2">
    <citation type="journal article" date="2003" name="Proc. Natl. Acad. Sci. U.S.A.">
        <title>The complete genome sequence of the Arabidopsis and tomato pathogen Pseudomonas syringae pv. tomato DC3000.</title>
        <authorList>
            <person name="Buell C.R."/>
            <person name="Joardar V."/>
            <person name="Lindeberg M."/>
            <person name="Selengut J."/>
            <person name="Paulsen I.T."/>
            <person name="Gwinn M.L."/>
            <person name="Dodson R.J."/>
            <person name="DeBoy R.T."/>
            <person name="Durkin A.S."/>
            <person name="Kolonay J.F."/>
            <person name="Madupu R."/>
            <person name="Daugherty S.C."/>
            <person name="Brinkac L.M."/>
            <person name="Beanan M.J."/>
            <person name="Haft D.H."/>
            <person name="Nelson W.C."/>
            <person name="Davidsen T.M."/>
            <person name="Zafar N."/>
            <person name="Zhou L."/>
            <person name="Liu J."/>
            <person name="Yuan Q."/>
            <person name="Khouri H.M."/>
            <person name="Fedorova N.B."/>
            <person name="Tran B."/>
            <person name="Russell D."/>
            <person name="Berry K.J."/>
            <person name="Utterback T.R."/>
            <person name="Van Aken S.E."/>
            <person name="Feldblyum T.V."/>
            <person name="D'Ascenzo M."/>
            <person name="Deng W.-L."/>
            <person name="Ramos A.R."/>
            <person name="Alfano J.R."/>
            <person name="Cartinhour S."/>
            <person name="Chatterjee A.K."/>
            <person name="Delaney T.P."/>
            <person name="Lazarowitz S.G."/>
            <person name="Martin G.B."/>
            <person name="Schneider D.J."/>
            <person name="Tang X."/>
            <person name="Bender C.L."/>
            <person name="White O."/>
            <person name="Fraser C.M."/>
            <person name="Collmer A."/>
        </authorList>
    </citation>
    <scope>NUCLEOTIDE SEQUENCE [LARGE SCALE GENOMIC DNA]</scope>
    <source>
        <strain>ATCC BAA-871 / DC3000</strain>
    </source>
</reference>
<name>DSBA_PSESM</name>
<keyword id="KW-1015">Disulfide bond</keyword>
<keyword id="KW-0574">Periplasm</keyword>
<keyword id="KW-0676">Redox-active center</keyword>
<keyword id="KW-1185">Reference proteome</keyword>
<keyword id="KW-0732">Signal</keyword>
<evidence type="ECO:0000250" key="1"/>
<evidence type="ECO:0000255" key="2"/>
<evidence type="ECO:0000255" key="3">
    <source>
        <dbReference type="PROSITE-ProRule" id="PRU00691"/>
    </source>
</evidence>
<evidence type="ECO:0000305" key="4"/>
<sequence length="214" mass="23340">MRNLIISAALVAASLFGMSAQAAEPIESGKQYVELTSAVPVAVPGKIEVIELFWYGCPHCYAFEPTINPWVEKLPSDVNFVRIPAMFGGPWDAHGQLFITLDTMGVEHKVHAAVFEAIQKGGKRLTDKNDMADFVATQGVNKDDFLKTFDSFAVKGKIAQYKELAKKYEVTGVPTMIVNGKYRFDLGSAGGPEKTLQVADQLIDKERAAAKAAK</sequence>
<proteinExistence type="inferred from homology"/>
<dbReference type="EMBL" id="AF036929">
    <property type="protein sequence ID" value="AAB92367.1"/>
    <property type="molecule type" value="Genomic_DNA"/>
</dbReference>
<dbReference type="EMBL" id="AE016853">
    <property type="protein sequence ID" value="AAO53886.1"/>
    <property type="molecule type" value="Genomic_DNA"/>
</dbReference>
<dbReference type="RefSeq" id="NP_790191.1">
    <property type="nucleotide sequence ID" value="NC_004578.1"/>
</dbReference>
<dbReference type="RefSeq" id="WP_005763490.1">
    <property type="nucleotide sequence ID" value="NC_004578.1"/>
</dbReference>
<dbReference type="SMR" id="O52376"/>
<dbReference type="STRING" id="223283.PSPTO_0341"/>
<dbReference type="DNASU" id="1181950"/>
<dbReference type="GeneID" id="1181950"/>
<dbReference type="KEGG" id="pst:PSPTO_0341"/>
<dbReference type="PATRIC" id="fig|223283.9.peg.357"/>
<dbReference type="eggNOG" id="COG1651">
    <property type="taxonomic scope" value="Bacteria"/>
</dbReference>
<dbReference type="HOGENOM" id="CLU_088255_1_0_6"/>
<dbReference type="OrthoDB" id="9784896at2"/>
<dbReference type="PhylomeDB" id="O52376"/>
<dbReference type="Proteomes" id="UP000002515">
    <property type="component" value="Chromosome"/>
</dbReference>
<dbReference type="GO" id="GO:0042597">
    <property type="term" value="C:periplasmic space"/>
    <property type="evidence" value="ECO:0007669"/>
    <property type="project" value="UniProtKB-SubCell"/>
</dbReference>
<dbReference type="GO" id="GO:0015036">
    <property type="term" value="F:disulfide oxidoreductase activity"/>
    <property type="evidence" value="ECO:0007669"/>
    <property type="project" value="UniProtKB-ARBA"/>
</dbReference>
<dbReference type="CDD" id="cd03019">
    <property type="entry name" value="DsbA_DsbA"/>
    <property type="match status" value="1"/>
</dbReference>
<dbReference type="Gene3D" id="3.40.30.10">
    <property type="entry name" value="Glutaredoxin"/>
    <property type="match status" value="1"/>
</dbReference>
<dbReference type="InterPro" id="IPR001853">
    <property type="entry name" value="DSBA-like_thioredoxin_dom"/>
</dbReference>
<dbReference type="InterPro" id="IPR023205">
    <property type="entry name" value="DsbA/DsbL"/>
</dbReference>
<dbReference type="InterPro" id="IPR050824">
    <property type="entry name" value="Thiol_disulfide_DsbA"/>
</dbReference>
<dbReference type="InterPro" id="IPR036249">
    <property type="entry name" value="Thioredoxin-like_sf"/>
</dbReference>
<dbReference type="InterPro" id="IPR017937">
    <property type="entry name" value="Thioredoxin_CS"/>
</dbReference>
<dbReference type="InterPro" id="IPR013766">
    <property type="entry name" value="Thioredoxin_domain"/>
</dbReference>
<dbReference type="PANTHER" id="PTHR35891">
    <property type="entry name" value="THIOL:DISULFIDE INTERCHANGE PROTEIN DSBA"/>
    <property type="match status" value="1"/>
</dbReference>
<dbReference type="PANTHER" id="PTHR35891:SF2">
    <property type="entry name" value="THIOL:DISULFIDE INTERCHANGE PROTEIN DSBA"/>
    <property type="match status" value="1"/>
</dbReference>
<dbReference type="Pfam" id="PF01323">
    <property type="entry name" value="DSBA"/>
    <property type="match status" value="1"/>
</dbReference>
<dbReference type="PIRSF" id="PIRSF001488">
    <property type="entry name" value="Tdi_protein"/>
    <property type="match status" value="1"/>
</dbReference>
<dbReference type="SUPFAM" id="SSF52833">
    <property type="entry name" value="Thioredoxin-like"/>
    <property type="match status" value="1"/>
</dbReference>
<dbReference type="PROSITE" id="PS00194">
    <property type="entry name" value="THIOREDOXIN_1"/>
    <property type="match status" value="1"/>
</dbReference>
<dbReference type="PROSITE" id="PS51352">
    <property type="entry name" value="THIOREDOXIN_2"/>
    <property type="match status" value="1"/>
</dbReference>